<evidence type="ECO:0000250" key="1">
    <source>
        <dbReference type="UniProtKB" id="P05198"/>
    </source>
</evidence>
<evidence type="ECO:0000250" key="2">
    <source>
        <dbReference type="UniProtKB" id="P32481"/>
    </source>
</evidence>
<evidence type="ECO:0000250" key="3">
    <source>
        <dbReference type="UniProtKB" id="P41091"/>
    </source>
</evidence>
<evidence type="ECO:0000250" key="4">
    <source>
        <dbReference type="UniProtKB" id="Q09130"/>
    </source>
</evidence>
<evidence type="ECO:0000255" key="5">
    <source>
        <dbReference type="PROSITE-ProRule" id="PRU01059"/>
    </source>
</evidence>
<evidence type="ECO:0000269" key="6">
    <source>
    </source>
</evidence>
<evidence type="ECO:0000269" key="7">
    <source>
    </source>
</evidence>
<evidence type="ECO:0000269" key="8">
    <source>
    </source>
</evidence>
<evidence type="ECO:0000269" key="9">
    <source>
    </source>
</evidence>
<evidence type="ECO:0007744" key="10">
    <source>
    </source>
</evidence>
<accession>Q9Z0N1</accession>
<organism>
    <name type="scientific">Mus musculus</name>
    <name type="common">Mouse</name>
    <dbReference type="NCBI Taxonomy" id="10090"/>
    <lineage>
        <taxon>Eukaryota</taxon>
        <taxon>Metazoa</taxon>
        <taxon>Chordata</taxon>
        <taxon>Craniata</taxon>
        <taxon>Vertebrata</taxon>
        <taxon>Euteleostomi</taxon>
        <taxon>Mammalia</taxon>
        <taxon>Eutheria</taxon>
        <taxon>Euarchontoglires</taxon>
        <taxon>Glires</taxon>
        <taxon>Rodentia</taxon>
        <taxon>Myomorpha</taxon>
        <taxon>Muroidea</taxon>
        <taxon>Muridae</taxon>
        <taxon>Murinae</taxon>
        <taxon>Mus</taxon>
        <taxon>Mus</taxon>
    </lineage>
</organism>
<reference key="1">
    <citation type="journal article" date="1998" name="Hum. Mol. Genet.">
        <title>Characterization of genes encoding translation initiation factor eIF-2gamma in mouse and human: sex chromosome localization, escape from X-inactivation and evolution.</title>
        <authorList>
            <person name="Ehrmann I.E."/>
            <person name="Ellis P.S."/>
            <person name="Mazeyrat S."/>
            <person name="Duthie S."/>
            <person name="Brockdorff N."/>
            <person name="Mattei M.-G."/>
            <person name="Gavin M.A."/>
            <person name="Affara N.A."/>
            <person name="Brown G.M."/>
            <person name="Simpson E."/>
            <person name="Mitchell M.J."/>
            <person name="Scott D.M."/>
        </authorList>
    </citation>
    <scope>NUCLEOTIDE SEQUENCE [MRNA]</scope>
    <scope>TISSUE SPECIFICITY</scope>
    <scope>ESCAPE FROM X-INACTIVATION</scope>
    <source>
        <strain>C57BL/6 X CBA</strain>
        <tissue>Lung</tissue>
    </source>
</reference>
<reference key="2">
    <citation type="journal article" date="2004" name="Genome Res.">
        <title>The status, quality, and expansion of the NIH full-length cDNA project: the Mammalian Gene Collection (MGC).</title>
        <authorList>
            <consortium name="The MGC Project Team"/>
        </authorList>
    </citation>
    <scope>NUCLEOTIDE SEQUENCE [LARGE SCALE MRNA]</scope>
    <source>
        <tissue>Limb</tissue>
    </source>
</reference>
<reference key="3">
    <citation type="journal article" date="2002" name="Hum. Mol. Genet.">
        <title>Sex differences in sex chromosome gene expression in mouse brain.</title>
        <authorList>
            <person name="Xu J."/>
            <person name="Burgoyne P.S."/>
            <person name="Arnold A.P."/>
        </authorList>
    </citation>
    <scope>TISSUE SPECIFICITY</scope>
</reference>
<reference key="4">
    <citation type="journal article" date="2006" name="Gene Expr. Patterns">
        <title>Sexually dimorphic expression of the X-linked gene Eif2s3x mRNA but not protein in mouse brain.</title>
        <authorList>
            <person name="Xu J."/>
            <person name="Watkins R."/>
            <person name="Arnold A.P."/>
        </authorList>
    </citation>
    <scope>TISSUE SPECIFICITY</scope>
</reference>
<reference key="5">
    <citation type="journal article" date="2007" name="Proc. Natl. Acad. Sci. U.S.A.">
        <title>Large-scale phosphorylation analysis of mouse liver.</title>
        <authorList>
            <person name="Villen J."/>
            <person name="Beausoleil S.A."/>
            <person name="Gerber S.A."/>
            <person name="Gygi S.P."/>
        </authorList>
    </citation>
    <scope>ACETYLATION [LARGE SCALE ANALYSIS] AT ALA-2</scope>
    <scope>PHOSPHORYLATION [LARGE SCALE ANALYSIS] AT SER-16</scope>
    <scope>CLEAVAGE OF INITIATOR METHIONINE [LARGE SCALE ANALYSIS]</scope>
    <scope>IDENTIFICATION BY MASS SPECTROMETRY [LARGE SCALE ANALYSIS]</scope>
    <source>
        <tissue>Liver</tissue>
    </source>
</reference>
<reference key="6">
    <citation type="journal article" date="2010" name="Cell">
        <title>A tissue-specific atlas of mouse protein phosphorylation and expression.</title>
        <authorList>
            <person name="Huttlin E.L."/>
            <person name="Jedrychowski M.P."/>
            <person name="Elias J.E."/>
            <person name="Goswami T."/>
            <person name="Rad R."/>
            <person name="Beausoleil S.A."/>
            <person name="Villen J."/>
            <person name="Haas W."/>
            <person name="Sowa M.E."/>
            <person name="Gygi S.P."/>
        </authorList>
    </citation>
    <scope>IDENTIFICATION BY MASS SPECTROMETRY [LARGE SCALE ANALYSIS]</scope>
    <source>
        <tissue>Brain</tissue>
        <tissue>Brown adipose tissue</tissue>
        <tissue>Kidney</tissue>
        <tissue>Liver</tissue>
        <tissue>Pancreas</tissue>
        <tissue>Spleen</tissue>
        <tissue>Testis</tissue>
    </source>
</reference>
<reference key="7">
    <citation type="journal article" date="2016" name="Science">
        <title>Two genes substitute for the mouse Y chromosome for spermatogenesis and reproduction.</title>
        <authorList>
            <person name="Yamauchi Y."/>
            <person name="Riel J.M."/>
            <person name="Ruthig V.A."/>
            <person name="Ortega E.A."/>
            <person name="Mitchell M.J."/>
            <person name="Ward M.A."/>
        </authorList>
    </citation>
    <scope>FUNCTION</scope>
</reference>
<protein>
    <recommendedName>
        <fullName>Eukaryotic translation initiation factor 2 subunit 3, X-linked</fullName>
        <ecNumber evidence="2">3.6.5.3</ecNumber>
    </recommendedName>
    <alternativeName>
        <fullName>Eukaryotic translation initiation factor 2 subunit gamma, X-linked</fullName>
        <shortName>eIF2-gamma X</shortName>
    </alternativeName>
</protein>
<comment type="function">
    <text evidence="1 8">Member of the eIF2 complex that functions in the early steps of protein synthesis by forming a ternary complex with GTP and initiator tRNA. This complex binds to a 40S ribosomal subunit, followed by mRNA binding to form the 43S pre-initiation complex (43S PIC). Junction of the 60S ribosomal subunit to form the 80S initiation complex is preceded by hydrolysis of the GTP bound to eIF2 and release of an eIF2-GDP binary complex. In order for eIF2 to recycle and catalyze another round of initiation, the GDP bound to eIF2 must exchange with GTP by way of a reaction catalyzed by eIF-2B (By similarity). Along with its paralog on chromosome Y, may contribute to spermatogenesis up to the round spermatid stage (PubMed:26823431).</text>
</comment>
<comment type="catalytic activity">
    <reaction evidence="2">
        <text>GTP + H2O = GDP + phosphate + H(+)</text>
        <dbReference type="Rhea" id="RHEA:19669"/>
        <dbReference type="ChEBI" id="CHEBI:15377"/>
        <dbReference type="ChEBI" id="CHEBI:15378"/>
        <dbReference type="ChEBI" id="CHEBI:37565"/>
        <dbReference type="ChEBI" id="CHEBI:43474"/>
        <dbReference type="ChEBI" id="CHEBI:58189"/>
        <dbReference type="EC" id="3.6.5.3"/>
    </reaction>
</comment>
<comment type="subunit">
    <text evidence="3">Eukaryotic translation initiation factor 2 eIF2 is a heterotrimeric complex composed of an alpha (EIF2S1), a beta (EIF2S2) and a gamma (EIF2S3) chain. eIF2 is member of the 43S pre-initiation complex (43S PIC). Interacts (via C-terminus) with CDC123; the interaction is direct.</text>
</comment>
<comment type="subcellular location">
    <subcellularLocation>
        <location evidence="4">Cytoplasm</location>
        <location evidence="4">Cytosol</location>
    </subcellularLocation>
</comment>
<comment type="tissue specificity">
    <text evidence="6 7 9">Widely expressed. In the brain, high mRNA levels are observed in specific regions, including the habenula, anterodorsal thalamic nucleus, hippocampus, hypothalamus, and cerebellum. Also expressed in the embryonic brain. There is a differential expression between males and females, which is tissue-specific. Females tend to have higher expression levels than males in the brain (cortex, hippocampus and paraventricular nucleus, but not in the habenula), as well as in other tissues. The up-regulation observed in females at the mRNA level may be due to the presence of 2 active copies of the gene.</text>
</comment>
<comment type="miscellaneous">
    <text evidence="9">Encoded by an chromosome X-linked gene which escapes inactivation. Has a homolog on chromosome Y (Eif2s3y).</text>
</comment>
<comment type="similarity">
    <text evidence="5">Belongs to the TRAFAC class translation factor GTPase superfamily. Classic translation factor GTPase family. EIF2G subfamily.</text>
</comment>
<name>IF2G_MOUSE</name>
<dbReference type="EC" id="3.6.5.3" evidence="2"/>
<dbReference type="EMBL" id="AJ006587">
    <property type="protein sequence ID" value="CAA07099.1"/>
    <property type="molecule type" value="mRNA"/>
</dbReference>
<dbReference type="EMBL" id="BC063755">
    <property type="protein sequence ID" value="AAH63755.1"/>
    <property type="molecule type" value="mRNA"/>
</dbReference>
<dbReference type="CCDS" id="CCDS30277.1"/>
<dbReference type="RefSeq" id="NP_036140.1">
    <property type="nucleotide sequence ID" value="NM_012010.3"/>
</dbReference>
<dbReference type="SMR" id="Q9Z0N1"/>
<dbReference type="BioGRID" id="205054">
    <property type="interactions" value="30"/>
</dbReference>
<dbReference type="FunCoup" id="Q9Z0N1">
    <property type="interactions" value="2456"/>
</dbReference>
<dbReference type="IntAct" id="Q9Z0N1">
    <property type="interactions" value="1"/>
</dbReference>
<dbReference type="STRING" id="10090.ENSMUSP00000059395"/>
<dbReference type="GlyGen" id="Q9Z0N1">
    <property type="glycosylation" value="2 sites, 1 O-linked glycan (2 sites)"/>
</dbReference>
<dbReference type="iPTMnet" id="Q9Z0N1"/>
<dbReference type="PhosphoSitePlus" id="Q9Z0N1"/>
<dbReference type="SwissPalm" id="Q9Z0N1"/>
<dbReference type="jPOST" id="Q9Z0N1"/>
<dbReference type="PaxDb" id="10090-ENSMUSP00000059395"/>
<dbReference type="ProteomicsDB" id="267210"/>
<dbReference type="Pumba" id="Q9Z0N1"/>
<dbReference type="Ensembl" id="ENSMUST00000050328.15">
    <property type="protein sequence ID" value="ENSMUSP00000059395.9"/>
    <property type="gene ID" value="ENSMUSG00000035150.16"/>
</dbReference>
<dbReference type="GeneID" id="26905"/>
<dbReference type="KEGG" id="mmu:26905"/>
<dbReference type="UCSC" id="uc009ttc.1">
    <property type="organism name" value="mouse"/>
</dbReference>
<dbReference type="AGR" id="MGI:1349431"/>
<dbReference type="CTD" id="26905"/>
<dbReference type="MGI" id="MGI:1349431">
    <property type="gene designation" value="Eif2s3x"/>
</dbReference>
<dbReference type="VEuPathDB" id="HostDB:ENSMUSG00000035150"/>
<dbReference type="eggNOG" id="KOG0466">
    <property type="taxonomic scope" value="Eukaryota"/>
</dbReference>
<dbReference type="GeneTree" id="ENSGT00550000074801"/>
<dbReference type="HOGENOM" id="CLU_027154_0_1_1"/>
<dbReference type="InParanoid" id="Q9Z0N1"/>
<dbReference type="OMA" id="NIGMVGH"/>
<dbReference type="OrthoDB" id="1045173at2759"/>
<dbReference type="PhylomeDB" id="Q9Z0N1"/>
<dbReference type="TreeFam" id="TF101513"/>
<dbReference type="Reactome" id="R-MMU-156827">
    <property type="pathway name" value="L13a-mediated translational silencing of Ceruloplasmin expression"/>
</dbReference>
<dbReference type="Reactome" id="R-MMU-381042">
    <property type="pathway name" value="PERK regulates gene expression"/>
</dbReference>
<dbReference type="Reactome" id="R-MMU-382556">
    <property type="pathway name" value="ABC-family proteins mediated transport"/>
</dbReference>
<dbReference type="Reactome" id="R-MMU-72649">
    <property type="pathway name" value="Translation initiation complex formation"/>
</dbReference>
<dbReference type="Reactome" id="R-MMU-72695">
    <property type="pathway name" value="Formation of the ternary complex, and subsequently, the 43S complex"/>
</dbReference>
<dbReference type="Reactome" id="R-MMU-72702">
    <property type="pathway name" value="Ribosomal scanning and start codon recognition"/>
</dbReference>
<dbReference type="Reactome" id="R-MMU-72706">
    <property type="pathway name" value="GTP hydrolysis and joining of the 60S ribosomal subunit"/>
</dbReference>
<dbReference type="Reactome" id="R-MMU-72731">
    <property type="pathway name" value="Recycling of eIF2:GDP"/>
</dbReference>
<dbReference type="Reactome" id="R-MMU-9840373">
    <property type="pathway name" value="Cellular response to mitochondrial stress"/>
</dbReference>
<dbReference type="BioGRID-ORCS" id="26905">
    <property type="hits" value="26 hits in 79 CRISPR screens"/>
</dbReference>
<dbReference type="ChiTaRS" id="Eif2s3x">
    <property type="organism name" value="mouse"/>
</dbReference>
<dbReference type="PRO" id="PR:Q9Z0N1"/>
<dbReference type="Proteomes" id="UP000000589">
    <property type="component" value="Chromosome X"/>
</dbReference>
<dbReference type="RNAct" id="Q9Z0N1">
    <property type="molecule type" value="protein"/>
</dbReference>
<dbReference type="Bgee" id="ENSMUSG00000035150">
    <property type="expression patterns" value="Expressed in ectoplacental cone and 253 other cell types or tissues"/>
</dbReference>
<dbReference type="ExpressionAtlas" id="Q9Z0N1">
    <property type="expression patterns" value="baseline and differential"/>
</dbReference>
<dbReference type="GO" id="GO:0005829">
    <property type="term" value="C:cytosol"/>
    <property type="evidence" value="ECO:0007669"/>
    <property type="project" value="UniProtKB-SubCell"/>
</dbReference>
<dbReference type="GO" id="GO:0005850">
    <property type="term" value="C:eukaryotic translation initiation factor 2 complex"/>
    <property type="evidence" value="ECO:0000250"/>
    <property type="project" value="UniProtKB"/>
</dbReference>
<dbReference type="GO" id="GO:0045202">
    <property type="term" value="C:synapse"/>
    <property type="evidence" value="ECO:0000314"/>
    <property type="project" value="SynGO"/>
</dbReference>
<dbReference type="GO" id="GO:0005525">
    <property type="term" value="F:GTP binding"/>
    <property type="evidence" value="ECO:0007669"/>
    <property type="project" value="UniProtKB-KW"/>
</dbReference>
<dbReference type="GO" id="GO:0003924">
    <property type="term" value="F:GTPase activity"/>
    <property type="evidence" value="ECO:0007669"/>
    <property type="project" value="InterPro"/>
</dbReference>
<dbReference type="GO" id="GO:1990856">
    <property type="term" value="F:methionyl-initiator methionine tRNA binding"/>
    <property type="evidence" value="ECO:0000250"/>
    <property type="project" value="UniProtKB"/>
</dbReference>
<dbReference type="GO" id="GO:0008135">
    <property type="term" value="F:translation factor activity, RNA binding"/>
    <property type="evidence" value="ECO:0000250"/>
    <property type="project" value="UniProtKB"/>
</dbReference>
<dbReference type="GO" id="GO:0003743">
    <property type="term" value="F:translation initiation factor activity"/>
    <property type="evidence" value="ECO:0000250"/>
    <property type="project" value="UniProtKB"/>
</dbReference>
<dbReference type="GO" id="GO:0002183">
    <property type="term" value="P:cytoplasmic translational initiation"/>
    <property type="evidence" value="ECO:0000250"/>
    <property type="project" value="UniProtKB"/>
</dbReference>
<dbReference type="GO" id="GO:0006413">
    <property type="term" value="P:translational initiation"/>
    <property type="evidence" value="ECO:0000250"/>
    <property type="project" value="UniProtKB"/>
</dbReference>
<dbReference type="CDD" id="cd01888">
    <property type="entry name" value="eIF2_gamma"/>
    <property type="match status" value="1"/>
</dbReference>
<dbReference type="CDD" id="cd03688">
    <property type="entry name" value="eIF2_gamma_II"/>
    <property type="match status" value="1"/>
</dbReference>
<dbReference type="CDD" id="cd15490">
    <property type="entry name" value="eIF2_gamma_III"/>
    <property type="match status" value="1"/>
</dbReference>
<dbReference type="FunFam" id="2.40.30.10:FF:000009">
    <property type="entry name" value="Eukaryotic translation initiation factor 2 subunit gamma"/>
    <property type="match status" value="1"/>
</dbReference>
<dbReference type="FunFam" id="2.40.30.10:FF:000011">
    <property type="entry name" value="Eukaryotic translation initiation factor 2 subunit gamma"/>
    <property type="match status" value="1"/>
</dbReference>
<dbReference type="FunFam" id="3.40.50.300:FF:000065">
    <property type="entry name" value="Eukaryotic translation initiation factor 2 subunit gamma"/>
    <property type="match status" value="1"/>
</dbReference>
<dbReference type="Gene3D" id="3.40.50.300">
    <property type="entry name" value="P-loop containing nucleotide triphosphate hydrolases"/>
    <property type="match status" value="1"/>
</dbReference>
<dbReference type="Gene3D" id="2.40.30.10">
    <property type="entry name" value="Translation factors"/>
    <property type="match status" value="2"/>
</dbReference>
<dbReference type="InterPro" id="IPR004161">
    <property type="entry name" value="EFTu-like_2"/>
</dbReference>
<dbReference type="InterPro" id="IPR050543">
    <property type="entry name" value="eIF2G"/>
</dbReference>
<dbReference type="InterPro" id="IPR015256">
    <property type="entry name" value="eIF2g_C"/>
</dbReference>
<dbReference type="InterPro" id="IPR044127">
    <property type="entry name" value="eIF2g_dom_2"/>
</dbReference>
<dbReference type="InterPro" id="IPR044128">
    <property type="entry name" value="eIF2g_GTP-bd"/>
</dbReference>
<dbReference type="InterPro" id="IPR027417">
    <property type="entry name" value="P-loop_NTPase"/>
</dbReference>
<dbReference type="InterPro" id="IPR000795">
    <property type="entry name" value="T_Tr_GTP-bd_dom"/>
</dbReference>
<dbReference type="InterPro" id="IPR009000">
    <property type="entry name" value="Transl_B-barrel_sf"/>
</dbReference>
<dbReference type="InterPro" id="IPR009001">
    <property type="entry name" value="Transl_elong_EF1A/Init_IF2_C"/>
</dbReference>
<dbReference type="NCBIfam" id="NF003077">
    <property type="entry name" value="PRK04000.1"/>
    <property type="match status" value="1"/>
</dbReference>
<dbReference type="PANTHER" id="PTHR42854">
    <property type="entry name" value="EUKARYOTIC TRANSLATION INITIATION FACTOR 2 SUBUNIT 3 FAMILY MEMBER"/>
    <property type="match status" value="1"/>
</dbReference>
<dbReference type="PANTHER" id="PTHR42854:SF3">
    <property type="entry name" value="EUKARYOTIC TRANSLATION INITIATION FACTOR 2 SUBUNIT 3-RELATED"/>
    <property type="match status" value="1"/>
</dbReference>
<dbReference type="Pfam" id="PF09173">
    <property type="entry name" value="eIF2_C"/>
    <property type="match status" value="1"/>
</dbReference>
<dbReference type="Pfam" id="PF00009">
    <property type="entry name" value="GTP_EFTU"/>
    <property type="match status" value="1"/>
</dbReference>
<dbReference type="Pfam" id="PF03144">
    <property type="entry name" value="GTP_EFTU_D2"/>
    <property type="match status" value="1"/>
</dbReference>
<dbReference type="PRINTS" id="PR00315">
    <property type="entry name" value="ELONGATNFCT"/>
</dbReference>
<dbReference type="SUPFAM" id="SSF50465">
    <property type="entry name" value="EF-Tu/eEF-1alpha/eIF2-gamma C-terminal domain"/>
    <property type="match status" value="1"/>
</dbReference>
<dbReference type="SUPFAM" id="SSF52540">
    <property type="entry name" value="P-loop containing nucleoside triphosphate hydrolases"/>
    <property type="match status" value="1"/>
</dbReference>
<dbReference type="SUPFAM" id="SSF50447">
    <property type="entry name" value="Translation proteins"/>
    <property type="match status" value="1"/>
</dbReference>
<dbReference type="PROSITE" id="PS51722">
    <property type="entry name" value="G_TR_2"/>
    <property type="match status" value="1"/>
</dbReference>
<sequence>MAGGEGGVTLGQPHLSRQDLATLDVTKLTPLSHEVISRQATINIGTIGHVAHGKSTVVKAISGVHTVRFKNELERNITIKLGYANAKIYKLDDPSCPRPECYRSCGSSTPDEFPTDIPGTKGNFKLVRHVSFVDCPGHDILMATMLNGAAVMDAALLLIAGNESCPQPQTSEHLAAIEIMKLKHILILQNKIDLVKESQAKEQYEQILAFVQGTVAEGAPIIPISAQLKYNIEVVCEYIVKKIPVPPRDFTSEPRLIVIRSFDVNKPGCEVDDLKGGVAGGSILKGVLKVGQEIEVRPGIVSKDSEGKLMCKPIFSKIVSLFAEHNDLQYAAPGGLIGVGTKIDPTLCRADRMVGQVLGAVGALPEIFTELEISYFLLRRLLGVRTEGDKKAAKVQKLSKNEVLMVNIGSLSTGGRVSAVKADLGKIVLTNPVCTEVGEKIALSRRVEKHWRLIGWGQIRRGVTIKPTVDDD</sequence>
<proteinExistence type="evidence at protein level"/>
<keyword id="KW-0007">Acetylation</keyword>
<keyword id="KW-0963">Cytoplasm</keyword>
<keyword id="KW-0342">GTP-binding</keyword>
<keyword id="KW-0378">Hydrolase</keyword>
<keyword id="KW-0396">Initiation factor</keyword>
<keyword id="KW-0547">Nucleotide-binding</keyword>
<keyword id="KW-0597">Phosphoprotein</keyword>
<keyword id="KW-0648">Protein biosynthesis</keyword>
<keyword id="KW-1185">Reference proteome</keyword>
<feature type="initiator methionine" description="Removed" evidence="10">
    <location>
        <position position="1"/>
    </location>
</feature>
<feature type="chain" id="PRO_0000137439" description="Eukaryotic translation initiation factor 2 subunit 3, X-linked">
    <location>
        <begin position="2"/>
        <end position="472"/>
    </location>
</feature>
<feature type="domain" description="tr-type G" evidence="5">
    <location>
        <begin position="39"/>
        <end position="248"/>
    </location>
</feature>
<feature type="region of interest" description="G1" evidence="5">
    <location>
        <begin position="48"/>
        <end position="55"/>
    </location>
</feature>
<feature type="region of interest" description="G2" evidence="5">
    <location>
        <begin position="76"/>
        <end position="80"/>
    </location>
</feature>
<feature type="region of interest" description="G3" evidence="5">
    <location>
        <begin position="134"/>
        <end position="137"/>
    </location>
</feature>
<feature type="region of interest" description="G4" evidence="5">
    <location>
        <begin position="190"/>
        <end position="193"/>
    </location>
</feature>
<feature type="region of interest" description="G5" evidence="5">
    <location>
        <begin position="225"/>
        <end position="227"/>
    </location>
</feature>
<feature type="region of interest" description="Interacts with Cdc123" evidence="3">
    <location>
        <begin position="457"/>
        <end position="469"/>
    </location>
</feature>
<feature type="binding site" evidence="2">
    <location>
        <begin position="51"/>
        <end position="56"/>
    </location>
    <ligand>
        <name>GTP</name>
        <dbReference type="ChEBI" id="CHEBI:37565"/>
    </ligand>
</feature>
<feature type="binding site" evidence="2">
    <location>
        <begin position="190"/>
        <end position="193"/>
    </location>
    <ligand>
        <name>GTP</name>
        <dbReference type="ChEBI" id="CHEBI:37565"/>
    </ligand>
</feature>
<feature type="binding site" evidence="2">
    <location>
        <begin position="225"/>
        <end position="227"/>
    </location>
    <ligand>
        <name>GTP</name>
        <dbReference type="ChEBI" id="CHEBI:37565"/>
    </ligand>
</feature>
<feature type="modified residue" description="N-acetylalanine" evidence="10">
    <location>
        <position position="2"/>
    </location>
</feature>
<feature type="modified residue" description="Phosphoserine" evidence="10">
    <location>
        <position position="16"/>
    </location>
</feature>
<gene>
    <name type="primary">Eif2s3x</name>
</gene>